<comment type="function">
    <text evidence="1">Responsible for synthesis of pseudouridine from uracil-55 in the psi GC loop of transfer RNAs.</text>
</comment>
<comment type="catalytic activity">
    <reaction evidence="1">
        <text>uridine(55) in tRNA = pseudouridine(55) in tRNA</text>
        <dbReference type="Rhea" id="RHEA:42532"/>
        <dbReference type="Rhea" id="RHEA-COMP:10101"/>
        <dbReference type="Rhea" id="RHEA-COMP:10102"/>
        <dbReference type="ChEBI" id="CHEBI:65314"/>
        <dbReference type="ChEBI" id="CHEBI:65315"/>
        <dbReference type="EC" id="5.4.99.25"/>
    </reaction>
</comment>
<comment type="similarity">
    <text evidence="1">Belongs to the pseudouridine synthase TruB family. Type 1 subfamily.</text>
</comment>
<proteinExistence type="inferred from homology"/>
<organism>
    <name type="scientific">Chlamydia trachomatis serovar L2 (strain ATCC VR-902B / DSM 19102 / 434/Bu)</name>
    <dbReference type="NCBI Taxonomy" id="471472"/>
    <lineage>
        <taxon>Bacteria</taxon>
        <taxon>Pseudomonadati</taxon>
        <taxon>Chlamydiota</taxon>
        <taxon>Chlamydiia</taxon>
        <taxon>Chlamydiales</taxon>
        <taxon>Chlamydiaceae</taxon>
        <taxon>Chlamydia/Chlamydophila group</taxon>
        <taxon>Chlamydia</taxon>
    </lineage>
</organism>
<protein>
    <recommendedName>
        <fullName evidence="1">tRNA pseudouridine synthase B</fullName>
        <ecNumber evidence="1">5.4.99.25</ecNumber>
    </recommendedName>
    <alternativeName>
        <fullName evidence="1">tRNA pseudouridine(55) synthase</fullName>
        <shortName evidence="1">Psi55 synthase</shortName>
    </alternativeName>
    <alternativeName>
        <fullName evidence="1">tRNA pseudouridylate synthase</fullName>
    </alternativeName>
    <alternativeName>
        <fullName evidence="1">tRNA-uridine isomerase</fullName>
    </alternativeName>
</protein>
<reference key="1">
    <citation type="journal article" date="2008" name="Genome Res.">
        <title>Chlamydia trachomatis: genome sequence analysis of lymphogranuloma venereum isolates.</title>
        <authorList>
            <person name="Thomson N.R."/>
            <person name="Holden M.T.G."/>
            <person name="Carder C."/>
            <person name="Lennard N."/>
            <person name="Lockey S.J."/>
            <person name="Marsh P."/>
            <person name="Skipp P."/>
            <person name="O'Connor C.D."/>
            <person name="Goodhead I."/>
            <person name="Norbertzcak H."/>
            <person name="Harris B."/>
            <person name="Ormond D."/>
            <person name="Rance R."/>
            <person name="Quail M.A."/>
            <person name="Parkhill J."/>
            <person name="Stephens R.S."/>
            <person name="Clarke I.N."/>
        </authorList>
    </citation>
    <scope>NUCLEOTIDE SEQUENCE [LARGE SCALE GENOMIC DNA]</scope>
    <source>
        <strain>ATCC VR-902B / DSM 19102 / 434/Bu</strain>
    </source>
</reference>
<gene>
    <name evidence="1" type="primary">truB</name>
    <name type="ordered locus">CTL0349</name>
</gene>
<sequence>MELATESIEGVLLVDKPQGRTSFSLIRSLVRLIGVKKIGHAGTLDPFATGVMVMLIGRKFTRLSDIMLFEDKEYAAVAHLGTTTDTYDCDGKIVGRSKKVPTMDEVLTCTSYFQGEIQQVPPMFSAKKVQGKKLYEYARQGLSIERRFATVTVNLRLVKYEYPRLHFVVQCSKGTYIRSIAHELGNMLGCGAYLEELRRLRSGSFSIDQCIDGNLLDEPEFNVSPYLRDANGLILQPAPVL</sequence>
<dbReference type="EC" id="5.4.99.25" evidence="1"/>
<dbReference type="EMBL" id="AM884176">
    <property type="protein sequence ID" value="CAP03789.1"/>
    <property type="molecule type" value="Genomic_DNA"/>
</dbReference>
<dbReference type="RefSeq" id="WP_009873551.1">
    <property type="nucleotide sequence ID" value="NC_010287.1"/>
</dbReference>
<dbReference type="RefSeq" id="YP_001654433.1">
    <property type="nucleotide sequence ID" value="NC_010287.1"/>
</dbReference>
<dbReference type="SMR" id="B0B9K2"/>
<dbReference type="KEGG" id="ctb:CTL0349"/>
<dbReference type="PATRIC" id="fig|471472.4.peg.377"/>
<dbReference type="HOGENOM" id="CLU_032087_2_0_0"/>
<dbReference type="Proteomes" id="UP001154402">
    <property type="component" value="Chromosome"/>
</dbReference>
<dbReference type="GO" id="GO:0003723">
    <property type="term" value="F:RNA binding"/>
    <property type="evidence" value="ECO:0007669"/>
    <property type="project" value="InterPro"/>
</dbReference>
<dbReference type="GO" id="GO:0160148">
    <property type="term" value="F:tRNA pseudouridine(55) synthase activity"/>
    <property type="evidence" value="ECO:0007669"/>
    <property type="project" value="UniProtKB-EC"/>
</dbReference>
<dbReference type="GO" id="GO:1990481">
    <property type="term" value="P:mRNA pseudouridine synthesis"/>
    <property type="evidence" value="ECO:0007669"/>
    <property type="project" value="TreeGrafter"/>
</dbReference>
<dbReference type="GO" id="GO:0031119">
    <property type="term" value="P:tRNA pseudouridine synthesis"/>
    <property type="evidence" value="ECO:0007669"/>
    <property type="project" value="UniProtKB-UniRule"/>
</dbReference>
<dbReference type="CDD" id="cd02573">
    <property type="entry name" value="PseudoU_synth_EcTruB"/>
    <property type="match status" value="1"/>
</dbReference>
<dbReference type="FunFam" id="3.30.2350.10:FF:000035">
    <property type="entry name" value="tRNA pseudouridine synthase B"/>
    <property type="match status" value="1"/>
</dbReference>
<dbReference type="Gene3D" id="3.30.2350.10">
    <property type="entry name" value="Pseudouridine synthase"/>
    <property type="match status" value="1"/>
</dbReference>
<dbReference type="HAMAP" id="MF_01080">
    <property type="entry name" value="TruB_bact"/>
    <property type="match status" value="1"/>
</dbReference>
<dbReference type="InterPro" id="IPR020103">
    <property type="entry name" value="PsdUridine_synth_cat_dom_sf"/>
</dbReference>
<dbReference type="InterPro" id="IPR002501">
    <property type="entry name" value="PsdUridine_synth_N"/>
</dbReference>
<dbReference type="InterPro" id="IPR014780">
    <property type="entry name" value="tRNA_psdUridine_synth_TruB"/>
</dbReference>
<dbReference type="InterPro" id="IPR032819">
    <property type="entry name" value="TruB_C"/>
</dbReference>
<dbReference type="NCBIfam" id="TIGR00431">
    <property type="entry name" value="TruB"/>
    <property type="match status" value="1"/>
</dbReference>
<dbReference type="PANTHER" id="PTHR13767:SF2">
    <property type="entry name" value="PSEUDOURIDYLATE SYNTHASE TRUB1"/>
    <property type="match status" value="1"/>
</dbReference>
<dbReference type="PANTHER" id="PTHR13767">
    <property type="entry name" value="TRNA-PSEUDOURIDINE SYNTHASE"/>
    <property type="match status" value="1"/>
</dbReference>
<dbReference type="Pfam" id="PF16198">
    <property type="entry name" value="TruB_C_2"/>
    <property type="match status" value="1"/>
</dbReference>
<dbReference type="Pfam" id="PF01509">
    <property type="entry name" value="TruB_N"/>
    <property type="match status" value="1"/>
</dbReference>
<dbReference type="SUPFAM" id="SSF55120">
    <property type="entry name" value="Pseudouridine synthase"/>
    <property type="match status" value="1"/>
</dbReference>
<name>TRUB_CHLT2</name>
<evidence type="ECO:0000255" key="1">
    <source>
        <dbReference type="HAMAP-Rule" id="MF_01080"/>
    </source>
</evidence>
<keyword id="KW-0413">Isomerase</keyword>
<keyword id="KW-0819">tRNA processing</keyword>
<feature type="chain" id="PRO_1000136810" description="tRNA pseudouridine synthase B">
    <location>
        <begin position="1"/>
        <end position="241"/>
    </location>
</feature>
<feature type="active site" description="Nucleophile" evidence="1">
    <location>
        <position position="45"/>
    </location>
</feature>
<accession>B0B9K2</accession>